<accession>P0AE78</accession>
<accession>P77392</accession>
<evidence type="ECO:0000250" key="1"/>
<evidence type="ECO:0000255" key="2">
    <source>
        <dbReference type="PROSITE-ProRule" id="PRU00703"/>
    </source>
</evidence>
<evidence type="ECO:0000305" key="3"/>
<evidence type="ECO:0007829" key="4">
    <source>
        <dbReference type="PDB" id="4HG0"/>
    </source>
</evidence>
<evidence type="ECO:0007829" key="5">
    <source>
        <dbReference type="PDB" id="5YZ2"/>
    </source>
</evidence>
<name>CORC_ECOLI</name>
<organism>
    <name type="scientific">Escherichia coli (strain K12)</name>
    <dbReference type="NCBI Taxonomy" id="83333"/>
    <lineage>
        <taxon>Bacteria</taxon>
        <taxon>Pseudomonadati</taxon>
        <taxon>Pseudomonadota</taxon>
        <taxon>Gammaproteobacteria</taxon>
        <taxon>Enterobacterales</taxon>
        <taxon>Enterobacteriaceae</taxon>
        <taxon>Escherichia</taxon>
    </lineage>
</organism>
<keyword id="KW-0002">3D-structure</keyword>
<keyword id="KW-0129">CBS domain</keyword>
<keyword id="KW-0170">Cobalt</keyword>
<keyword id="KW-0460">Magnesium</keyword>
<keyword id="KW-1185">Reference proteome</keyword>
<keyword id="KW-0677">Repeat</keyword>
<keyword id="KW-0813">Transport</keyword>
<dbReference type="EMBL" id="U82598">
    <property type="protein sequence ID" value="AAB40860.1"/>
    <property type="molecule type" value="Genomic_DNA"/>
</dbReference>
<dbReference type="EMBL" id="U00096">
    <property type="protein sequence ID" value="AAC73759.1"/>
    <property type="molecule type" value="Genomic_DNA"/>
</dbReference>
<dbReference type="EMBL" id="AP009048">
    <property type="protein sequence ID" value="BAA35309.2"/>
    <property type="molecule type" value="Genomic_DNA"/>
</dbReference>
<dbReference type="PIR" id="H64800">
    <property type="entry name" value="H64800"/>
</dbReference>
<dbReference type="RefSeq" id="NP_415191.1">
    <property type="nucleotide sequence ID" value="NC_000913.3"/>
</dbReference>
<dbReference type="RefSeq" id="WP_001278605.1">
    <property type="nucleotide sequence ID" value="NZ_STEB01000031.1"/>
</dbReference>
<dbReference type="PDB" id="4HG0">
    <property type="method" value="X-ray"/>
    <property type="resolution" value="3.10 A"/>
    <property type="chains" value="A=1-292"/>
</dbReference>
<dbReference type="PDB" id="5YZ2">
    <property type="method" value="X-ray"/>
    <property type="resolution" value="1.75 A"/>
    <property type="chains" value="A/B=67-193"/>
</dbReference>
<dbReference type="PDBsum" id="4HG0"/>
<dbReference type="PDBsum" id="5YZ2"/>
<dbReference type="SMR" id="P0AE78"/>
<dbReference type="BioGRID" id="4260830">
    <property type="interactions" value="557"/>
</dbReference>
<dbReference type="DIP" id="DIP-35960N"/>
<dbReference type="FunCoup" id="P0AE78">
    <property type="interactions" value="175"/>
</dbReference>
<dbReference type="IntAct" id="P0AE78">
    <property type="interactions" value="9"/>
</dbReference>
<dbReference type="STRING" id="511145.b0658"/>
<dbReference type="jPOST" id="P0AE78"/>
<dbReference type="PaxDb" id="511145-b0658"/>
<dbReference type="EnsemblBacteria" id="AAC73759">
    <property type="protein sequence ID" value="AAC73759"/>
    <property type="gene ID" value="b0658"/>
</dbReference>
<dbReference type="GeneID" id="93776824"/>
<dbReference type="GeneID" id="946417"/>
<dbReference type="KEGG" id="ecj:JW0655"/>
<dbReference type="KEGG" id="eco:b0658"/>
<dbReference type="KEGG" id="ecoc:C3026_03290"/>
<dbReference type="PATRIC" id="fig|1411691.4.peg.1610"/>
<dbReference type="EchoBASE" id="EB3418"/>
<dbReference type="eggNOG" id="COG4535">
    <property type="taxonomic scope" value="Bacteria"/>
</dbReference>
<dbReference type="HOGENOM" id="CLU_015237_3_0_6"/>
<dbReference type="InParanoid" id="P0AE78"/>
<dbReference type="OMA" id="QMISIKA"/>
<dbReference type="OrthoDB" id="9797674at2"/>
<dbReference type="PhylomeDB" id="P0AE78"/>
<dbReference type="BioCyc" id="EcoCyc:G6361-MONOMER"/>
<dbReference type="EvolutionaryTrace" id="P0AE78"/>
<dbReference type="PRO" id="PR:P0AE78"/>
<dbReference type="Proteomes" id="UP000000625">
    <property type="component" value="Chromosome"/>
</dbReference>
<dbReference type="GO" id="GO:0005886">
    <property type="term" value="C:plasma membrane"/>
    <property type="evidence" value="ECO:0000318"/>
    <property type="project" value="GO_Central"/>
</dbReference>
<dbReference type="GO" id="GO:0050660">
    <property type="term" value="F:flavin adenine dinucleotide binding"/>
    <property type="evidence" value="ECO:0007669"/>
    <property type="project" value="InterPro"/>
</dbReference>
<dbReference type="CDD" id="cd04590">
    <property type="entry name" value="CBS_pair_CorC_HlyC_assoc"/>
    <property type="match status" value="1"/>
</dbReference>
<dbReference type="FunFam" id="3.30.465.10:FF:000003">
    <property type="entry name" value="Magnesium and cobalt efflux protein corC"/>
    <property type="match status" value="1"/>
</dbReference>
<dbReference type="FunFam" id="3.10.580.10:FF:000002">
    <property type="entry name" value="Magnesium/cobalt efflux protein CorC"/>
    <property type="match status" value="1"/>
</dbReference>
<dbReference type="Gene3D" id="3.30.465.10">
    <property type="match status" value="1"/>
</dbReference>
<dbReference type="Gene3D" id="3.10.580.10">
    <property type="entry name" value="CBS-domain"/>
    <property type="match status" value="1"/>
</dbReference>
<dbReference type="InterPro" id="IPR000644">
    <property type="entry name" value="CBS_dom"/>
</dbReference>
<dbReference type="InterPro" id="IPR046342">
    <property type="entry name" value="CBS_dom_sf"/>
</dbReference>
<dbReference type="InterPro" id="IPR054115">
    <property type="entry name" value="CorC_N"/>
</dbReference>
<dbReference type="InterPro" id="IPR036318">
    <property type="entry name" value="FAD-bd_PCMH-like_sf"/>
</dbReference>
<dbReference type="InterPro" id="IPR016169">
    <property type="entry name" value="FAD-bd_PCMH_sub2"/>
</dbReference>
<dbReference type="InterPro" id="IPR044751">
    <property type="entry name" value="Ion_transp-like_CBS"/>
</dbReference>
<dbReference type="InterPro" id="IPR005170">
    <property type="entry name" value="Transptr-assoc_dom"/>
</dbReference>
<dbReference type="NCBIfam" id="NF011675">
    <property type="entry name" value="PRK15094.1"/>
    <property type="match status" value="1"/>
</dbReference>
<dbReference type="PANTHER" id="PTHR22777">
    <property type="entry name" value="HEMOLYSIN-RELATED"/>
    <property type="match status" value="1"/>
</dbReference>
<dbReference type="PANTHER" id="PTHR22777:SF27">
    <property type="entry name" value="MAGNESIUM AND COBALT EFFLUX PROTEIN CORC"/>
    <property type="match status" value="1"/>
</dbReference>
<dbReference type="Pfam" id="PF00571">
    <property type="entry name" value="CBS"/>
    <property type="match status" value="2"/>
</dbReference>
<dbReference type="Pfam" id="PF03471">
    <property type="entry name" value="CorC_HlyC"/>
    <property type="match status" value="1"/>
</dbReference>
<dbReference type="Pfam" id="PF21917">
    <property type="entry name" value="NMB0537_N"/>
    <property type="match status" value="1"/>
</dbReference>
<dbReference type="SMART" id="SM00116">
    <property type="entry name" value="CBS"/>
    <property type="match status" value="2"/>
</dbReference>
<dbReference type="SMART" id="SM01091">
    <property type="entry name" value="CorC_HlyC"/>
    <property type="match status" value="1"/>
</dbReference>
<dbReference type="SUPFAM" id="SSF54631">
    <property type="entry name" value="CBS-domain pair"/>
    <property type="match status" value="1"/>
</dbReference>
<dbReference type="SUPFAM" id="SSF56176">
    <property type="entry name" value="FAD-binding/transporter-associated domain-like"/>
    <property type="match status" value="1"/>
</dbReference>
<dbReference type="PROSITE" id="PS51371">
    <property type="entry name" value="CBS"/>
    <property type="match status" value="2"/>
</dbReference>
<reference key="1">
    <citation type="journal article" date="1996" name="DNA Res.">
        <title>A 718-kb DNA sequence of the Escherichia coli K-12 genome corresponding to the 12.7-28.0 min region on the linkage map.</title>
        <authorList>
            <person name="Oshima T."/>
            <person name="Aiba H."/>
            <person name="Baba T."/>
            <person name="Fujita K."/>
            <person name="Hayashi K."/>
            <person name="Honjo A."/>
            <person name="Ikemoto K."/>
            <person name="Inada T."/>
            <person name="Itoh T."/>
            <person name="Kajihara M."/>
            <person name="Kanai K."/>
            <person name="Kashimoto K."/>
            <person name="Kimura S."/>
            <person name="Kitagawa M."/>
            <person name="Makino K."/>
            <person name="Masuda S."/>
            <person name="Miki T."/>
            <person name="Mizobuchi K."/>
            <person name="Mori H."/>
            <person name="Motomura K."/>
            <person name="Nakamura Y."/>
            <person name="Nashimoto H."/>
            <person name="Nishio Y."/>
            <person name="Saito N."/>
            <person name="Sampei G."/>
            <person name="Seki Y."/>
            <person name="Tagami H."/>
            <person name="Takemoto K."/>
            <person name="Wada C."/>
            <person name="Yamamoto Y."/>
            <person name="Yano M."/>
            <person name="Horiuchi T."/>
        </authorList>
    </citation>
    <scope>NUCLEOTIDE SEQUENCE [LARGE SCALE GENOMIC DNA]</scope>
    <source>
        <strain>K12 / W3110 / ATCC 27325 / DSM 5911</strain>
    </source>
</reference>
<reference key="2">
    <citation type="submission" date="1997-01" db="EMBL/GenBank/DDBJ databases">
        <title>Sequence of minutes 4-25 of Escherichia coli.</title>
        <authorList>
            <person name="Chung E."/>
            <person name="Allen E."/>
            <person name="Araujo R."/>
            <person name="Aparicio A.M."/>
            <person name="Davis K."/>
            <person name="Duncan M."/>
            <person name="Federspiel N."/>
            <person name="Hyman R."/>
            <person name="Kalman S."/>
            <person name="Komp C."/>
            <person name="Kurdi O."/>
            <person name="Lew H."/>
            <person name="Lin D."/>
            <person name="Namath A."/>
            <person name="Oefner P."/>
            <person name="Roberts D."/>
            <person name="Schramm S."/>
            <person name="Davis R.W."/>
        </authorList>
    </citation>
    <scope>NUCLEOTIDE SEQUENCE [LARGE SCALE GENOMIC DNA]</scope>
    <source>
        <strain>K12 / MG1655 / ATCC 47076</strain>
    </source>
</reference>
<reference key="3">
    <citation type="journal article" date="1997" name="Science">
        <title>The complete genome sequence of Escherichia coli K-12.</title>
        <authorList>
            <person name="Blattner F.R."/>
            <person name="Plunkett G. III"/>
            <person name="Bloch C.A."/>
            <person name="Perna N.T."/>
            <person name="Burland V."/>
            <person name="Riley M."/>
            <person name="Collado-Vides J."/>
            <person name="Glasner J.D."/>
            <person name="Rode C.K."/>
            <person name="Mayhew G.F."/>
            <person name="Gregor J."/>
            <person name="Davis N.W."/>
            <person name="Kirkpatrick H.A."/>
            <person name="Goeden M.A."/>
            <person name="Rose D.J."/>
            <person name="Mau B."/>
            <person name="Shao Y."/>
        </authorList>
    </citation>
    <scope>NUCLEOTIDE SEQUENCE [LARGE SCALE GENOMIC DNA]</scope>
    <source>
        <strain>K12 / MG1655 / ATCC 47076</strain>
    </source>
</reference>
<reference key="4">
    <citation type="journal article" date="2006" name="Mol. Syst. Biol.">
        <title>Highly accurate genome sequences of Escherichia coli K-12 strains MG1655 and W3110.</title>
        <authorList>
            <person name="Hayashi K."/>
            <person name="Morooka N."/>
            <person name="Yamamoto Y."/>
            <person name="Fujita K."/>
            <person name="Isono K."/>
            <person name="Choi S."/>
            <person name="Ohtsubo E."/>
            <person name="Baba T."/>
            <person name="Wanner B.L."/>
            <person name="Mori H."/>
            <person name="Horiuchi T."/>
        </authorList>
    </citation>
    <scope>NUCLEOTIDE SEQUENCE [LARGE SCALE GENOMIC DNA]</scope>
    <source>
        <strain>K12 / W3110 / ATCC 27325 / DSM 5911</strain>
    </source>
</reference>
<gene>
    <name type="primary">corC</name>
    <name type="synonym">ybeX</name>
    <name type="ordered locus">b0658</name>
    <name type="ordered locus">JW0655</name>
</gene>
<proteinExistence type="evidence at protein level"/>
<feature type="chain" id="PRO_0000088345" description="Magnesium and cobalt efflux protein CorC">
    <location>
        <begin position="1"/>
        <end position="292"/>
    </location>
</feature>
<feature type="domain" description="CBS 1" evidence="2">
    <location>
        <begin position="73"/>
        <end position="133"/>
    </location>
</feature>
<feature type="domain" description="CBS 2" evidence="2">
    <location>
        <begin position="135"/>
        <end position="195"/>
    </location>
</feature>
<feature type="helix" evidence="4">
    <location>
        <begin position="52"/>
        <end position="66"/>
    </location>
</feature>
<feature type="helix" evidence="5">
    <location>
        <begin position="69"/>
        <end position="72"/>
    </location>
</feature>
<feature type="strand" evidence="5">
    <location>
        <begin position="73"/>
        <end position="75"/>
    </location>
</feature>
<feature type="helix" evidence="5">
    <location>
        <begin position="76"/>
        <end position="78"/>
    </location>
</feature>
<feature type="strand" evidence="4">
    <location>
        <begin position="82"/>
        <end position="86"/>
    </location>
</feature>
<feature type="helix" evidence="5">
    <location>
        <begin position="88"/>
        <end position="98"/>
    </location>
</feature>
<feature type="strand" evidence="5">
    <location>
        <begin position="101"/>
        <end position="109"/>
    </location>
</feature>
<feature type="strand" evidence="5">
    <location>
        <begin position="112"/>
        <end position="118"/>
    </location>
</feature>
<feature type="helix" evidence="5">
    <location>
        <begin position="119"/>
        <end position="126"/>
    </location>
</feature>
<feature type="helix" evidence="5">
    <location>
        <begin position="135"/>
        <end position="138"/>
    </location>
</feature>
<feature type="strand" evidence="5">
    <location>
        <begin position="144"/>
        <end position="146"/>
    </location>
</feature>
<feature type="helix" evidence="5">
    <location>
        <begin position="151"/>
        <end position="161"/>
    </location>
</feature>
<feature type="strand" evidence="5">
    <location>
        <begin position="164"/>
        <end position="169"/>
    </location>
</feature>
<feature type="strand" evidence="5">
    <location>
        <begin position="175"/>
        <end position="180"/>
    </location>
</feature>
<feature type="helix" evidence="5">
    <location>
        <begin position="181"/>
        <end position="192"/>
    </location>
</feature>
<feature type="strand" evidence="4">
    <location>
        <begin position="206"/>
        <end position="208"/>
    </location>
</feature>
<feature type="strand" evidence="4">
    <location>
        <begin position="211"/>
        <end position="215"/>
    </location>
</feature>
<feature type="helix" evidence="4">
    <location>
        <begin position="220"/>
        <end position="227"/>
    </location>
</feature>
<feature type="helix" evidence="4">
    <location>
        <begin position="239"/>
        <end position="247"/>
    </location>
</feature>
<feature type="strand" evidence="4">
    <location>
        <begin position="256"/>
        <end position="261"/>
    </location>
</feature>
<feature type="strand" evidence="4">
    <location>
        <begin position="263"/>
        <end position="269"/>
    </location>
</feature>
<feature type="strand" evidence="4">
    <location>
        <begin position="274"/>
        <end position="280"/>
    </location>
</feature>
<protein>
    <recommendedName>
        <fullName>Magnesium and cobalt efflux protein CorC</fullName>
    </recommendedName>
</protein>
<comment type="function">
    <text evidence="1">Plays a role in the transport of magnesium and cobalt ions.</text>
</comment>
<comment type="similarity">
    <text evidence="3">Belongs to the UPF0053 family.</text>
</comment>
<sequence length="292" mass="33298">MSDDNSHSSDTISNKKGFFSLLLSQLFHGEPKNRDELLALIRDSGQNDLIDEDTRDMLEGVMDIADQRVRDIMIPRSQMITLKRNQTLDECLDVIIESAHSRFPVISEDKDHIEGILMAKDLLPFMRSDAEAFSMDKVLRQAVVVPESKRVDRMLKEFRSQRYHMAIVIDEFGGVSGLVTIEDILELIVGEIEDEYDEEDDIDFRQLSRHTWTVRALASIEDFNEAFGTHFSDEEVDTIGGLVMQAFGHLPARGETIDIDGYQFKVAMADSRRIIQVHVKIPDDSPQPKLDE</sequence>